<feature type="chain" id="PRO_1000215974" description="Membrane protein insertase YidC">
    <location>
        <begin position="1"/>
        <end position="544"/>
    </location>
</feature>
<feature type="transmembrane region" description="Helical" evidence="1">
    <location>
        <begin position="6"/>
        <end position="26"/>
    </location>
</feature>
<feature type="transmembrane region" description="Helical" evidence="1">
    <location>
        <begin position="343"/>
        <end position="363"/>
    </location>
</feature>
<feature type="transmembrane region" description="Helical" evidence="1">
    <location>
        <begin position="418"/>
        <end position="438"/>
    </location>
</feature>
<feature type="transmembrane region" description="Helical" evidence="1">
    <location>
        <begin position="456"/>
        <end position="476"/>
    </location>
</feature>
<feature type="transmembrane region" description="Helical" evidence="1">
    <location>
        <begin position="497"/>
        <end position="517"/>
    </location>
</feature>
<feature type="region of interest" description="Disordered" evidence="2">
    <location>
        <begin position="112"/>
        <end position="132"/>
    </location>
</feature>
<accession>C6DK98</accession>
<gene>
    <name evidence="1" type="primary">yidC</name>
    <name type="ordered locus">PC1_4293</name>
</gene>
<sequence length="544" mass="60889">MDSQRNLLLIALLFVTFMLWQAWETDKNPPATTQAIQQATNAVTGDATNQGVPASGQGKLITVKTDVLSLTINTRGGDVEQAHLLAYPDTLGSDKPFHLLETTSEFVYQAQSGLTGKNGPDNPANGPRPLFTTTQDSFELADGQNELRIPMTYTAADGVTYTKTFVLKRGDYALNVDYSVNNTSAQPLELTLFGQLKQSIDLPKHRDTGSSNFALHTYRGAAFSSSEDKYKKYSFSDMDENLNITTNSGWVAMLQQYFATAWIPTTAGANTFYTNKLGNGQAAIGFKAAPVVVAAGSQQNLNATLWVGPEIQDKMAAVAPHLDLTVDYGWLWFISQPLFKLLKFLHGFIGNWGFSIIAITFIVRGVMYPLTKAQYTSMAKMRLLQPKLQAMRERIGDDKQRMSQEMMALYKSEKVNPLGGCFPLLIQMPIFLALYYMLMGSVELRHAPFALWIHDLSAQDPYYILPILMGVTMFFIQKMSPTTVTDPMQQKIMTYMPVIFTVFFLWFPSGLVMYYIVSNLVTILQQQLIYRGLEKRGLHSREKK</sequence>
<proteinExistence type="inferred from homology"/>
<comment type="function">
    <text evidence="1">Required for the insertion and/or proper folding and/or complex formation of integral membrane proteins into the membrane. Involved in integration of membrane proteins that insert both dependently and independently of the Sec translocase complex, as well as at least some lipoproteins. Aids folding of multispanning membrane proteins.</text>
</comment>
<comment type="subunit">
    <text evidence="1">Interacts with the Sec translocase complex via SecD. Specifically interacts with transmembrane segments of nascent integral membrane proteins during membrane integration.</text>
</comment>
<comment type="subcellular location">
    <subcellularLocation>
        <location evidence="1">Cell inner membrane</location>
        <topology evidence="1">Multi-pass membrane protein</topology>
    </subcellularLocation>
</comment>
<comment type="similarity">
    <text evidence="1">Belongs to the OXA1/ALB3/YidC family. Type 1 subfamily.</text>
</comment>
<reference key="1">
    <citation type="submission" date="2009-07" db="EMBL/GenBank/DDBJ databases">
        <title>Complete sequence of Pectobacterium carotovorum subsp. carotovorum PC1.</title>
        <authorList>
            <consortium name="US DOE Joint Genome Institute"/>
            <person name="Lucas S."/>
            <person name="Copeland A."/>
            <person name="Lapidus A."/>
            <person name="Glavina del Rio T."/>
            <person name="Tice H."/>
            <person name="Bruce D."/>
            <person name="Goodwin L."/>
            <person name="Pitluck S."/>
            <person name="Munk A.C."/>
            <person name="Brettin T."/>
            <person name="Detter J.C."/>
            <person name="Han C."/>
            <person name="Tapia R."/>
            <person name="Larimer F."/>
            <person name="Land M."/>
            <person name="Hauser L."/>
            <person name="Kyrpides N."/>
            <person name="Mikhailova N."/>
            <person name="Balakrishnan V."/>
            <person name="Glasner J."/>
            <person name="Perna N.T."/>
        </authorList>
    </citation>
    <scope>NUCLEOTIDE SEQUENCE [LARGE SCALE GENOMIC DNA]</scope>
    <source>
        <strain>PC1</strain>
    </source>
</reference>
<name>YIDC_PECCP</name>
<organism>
    <name type="scientific">Pectobacterium carotovorum subsp. carotovorum (strain PC1)</name>
    <dbReference type="NCBI Taxonomy" id="561230"/>
    <lineage>
        <taxon>Bacteria</taxon>
        <taxon>Pseudomonadati</taxon>
        <taxon>Pseudomonadota</taxon>
        <taxon>Gammaproteobacteria</taxon>
        <taxon>Enterobacterales</taxon>
        <taxon>Pectobacteriaceae</taxon>
        <taxon>Pectobacterium</taxon>
    </lineage>
</organism>
<evidence type="ECO:0000255" key="1">
    <source>
        <dbReference type="HAMAP-Rule" id="MF_01810"/>
    </source>
</evidence>
<evidence type="ECO:0000256" key="2">
    <source>
        <dbReference type="SAM" id="MobiDB-lite"/>
    </source>
</evidence>
<keyword id="KW-0997">Cell inner membrane</keyword>
<keyword id="KW-1003">Cell membrane</keyword>
<keyword id="KW-0143">Chaperone</keyword>
<keyword id="KW-0472">Membrane</keyword>
<keyword id="KW-0653">Protein transport</keyword>
<keyword id="KW-0812">Transmembrane</keyword>
<keyword id="KW-1133">Transmembrane helix</keyword>
<keyword id="KW-0813">Transport</keyword>
<protein>
    <recommendedName>
        <fullName evidence="1">Membrane protein insertase YidC</fullName>
    </recommendedName>
    <alternativeName>
        <fullName evidence="1">Foldase YidC</fullName>
    </alternativeName>
    <alternativeName>
        <fullName evidence="1">Membrane integrase YidC</fullName>
    </alternativeName>
    <alternativeName>
        <fullName evidence="1">Membrane protein YidC</fullName>
    </alternativeName>
</protein>
<dbReference type="EMBL" id="CP001657">
    <property type="protein sequence ID" value="ACT15307.1"/>
    <property type="molecule type" value="Genomic_DNA"/>
</dbReference>
<dbReference type="RefSeq" id="WP_015842366.1">
    <property type="nucleotide sequence ID" value="NC_012917.1"/>
</dbReference>
<dbReference type="SMR" id="C6DK98"/>
<dbReference type="STRING" id="561230.PC1_4293"/>
<dbReference type="GeneID" id="67796281"/>
<dbReference type="KEGG" id="pct:PC1_4293"/>
<dbReference type="eggNOG" id="COG0706">
    <property type="taxonomic scope" value="Bacteria"/>
</dbReference>
<dbReference type="HOGENOM" id="CLU_016535_3_0_6"/>
<dbReference type="OrthoDB" id="9780552at2"/>
<dbReference type="Proteomes" id="UP000002736">
    <property type="component" value="Chromosome"/>
</dbReference>
<dbReference type="GO" id="GO:0005886">
    <property type="term" value="C:plasma membrane"/>
    <property type="evidence" value="ECO:0007669"/>
    <property type="project" value="UniProtKB-SubCell"/>
</dbReference>
<dbReference type="GO" id="GO:0032977">
    <property type="term" value="F:membrane insertase activity"/>
    <property type="evidence" value="ECO:0007669"/>
    <property type="project" value="InterPro"/>
</dbReference>
<dbReference type="GO" id="GO:0051205">
    <property type="term" value="P:protein insertion into membrane"/>
    <property type="evidence" value="ECO:0007669"/>
    <property type="project" value="TreeGrafter"/>
</dbReference>
<dbReference type="GO" id="GO:0015031">
    <property type="term" value="P:protein transport"/>
    <property type="evidence" value="ECO:0007669"/>
    <property type="project" value="UniProtKB-KW"/>
</dbReference>
<dbReference type="CDD" id="cd20070">
    <property type="entry name" value="5TM_YidC_Alb3"/>
    <property type="match status" value="1"/>
</dbReference>
<dbReference type="CDD" id="cd19961">
    <property type="entry name" value="EcYidC-like_peri"/>
    <property type="match status" value="1"/>
</dbReference>
<dbReference type="FunFam" id="2.70.98.90:FF:000001">
    <property type="entry name" value="Membrane protein insertase YidC"/>
    <property type="match status" value="1"/>
</dbReference>
<dbReference type="Gene3D" id="2.70.98.90">
    <property type="match status" value="1"/>
</dbReference>
<dbReference type="HAMAP" id="MF_01810">
    <property type="entry name" value="YidC_type1"/>
    <property type="match status" value="1"/>
</dbReference>
<dbReference type="InterPro" id="IPR019998">
    <property type="entry name" value="Membr_insert_YidC"/>
</dbReference>
<dbReference type="InterPro" id="IPR028053">
    <property type="entry name" value="Membr_insert_YidC_N"/>
</dbReference>
<dbReference type="InterPro" id="IPR001708">
    <property type="entry name" value="YidC/ALB3/OXA1/COX18"/>
</dbReference>
<dbReference type="InterPro" id="IPR028055">
    <property type="entry name" value="YidC/Oxa/ALB_C"/>
</dbReference>
<dbReference type="InterPro" id="IPR047196">
    <property type="entry name" value="YidC_ALB_C"/>
</dbReference>
<dbReference type="InterPro" id="IPR038221">
    <property type="entry name" value="YidC_periplasmic_sf"/>
</dbReference>
<dbReference type="NCBIfam" id="NF002351">
    <property type="entry name" value="PRK01318.1-1"/>
    <property type="match status" value="1"/>
</dbReference>
<dbReference type="NCBIfam" id="NF002352">
    <property type="entry name" value="PRK01318.1-3"/>
    <property type="match status" value="1"/>
</dbReference>
<dbReference type="NCBIfam" id="TIGR03593">
    <property type="entry name" value="yidC_nterm"/>
    <property type="match status" value="1"/>
</dbReference>
<dbReference type="NCBIfam" id="TIGR03592">
    <property type="entry name" value="yidC_oxa1_cterm"/>
    <property type="match status" value="1"/>
</dbReference>
<dbReference type="PANTHER" id="PTHR12428:SF65">
    <property type="entry name" value="CYTOCHROME C OXIDASE ASSEMBLY PROTEIN COX18, MITOCHONDRIAL"/>
    <property type="match status" value="1"/>
</dbReference>
<dbReference type="PANTHER" id="PTHR12428">
    <property type="entry name" value="OXA1"/>
    <property type="match status" value="1"/>
</dbReference>
<dbReference type="Pfam" id="PF02096">
    <property type="entry name" value="60KD_IMP"/>
    <property type="match status" value="1"/>
</dbReference>
<dbReference type="Pfam" id="PF14849">
    <property type="entry name" value="YidC_periplas"/>
    <property type="match status" value="1"/>
</dbReference>
<dbReference type="PRINTS" id="PR00701">
    <property type="entry name" value="60KDINNERMP"/>
</dbReference>
<dbReference type="PRINTS" id="PR01900">
    <property type="entry name" value="YIDCPROTEIN"/>
</dbReference>